<feature type="chain" id="PRO_0000438696" description="Meiosis-specific protein ASY1">
    <location>
        <begin position="1"/>
        <end position="596"/>
    </location>
</feature>
<feature type="domain" description="HORMA" evidence="1">
    <location>
        <begin position="15"/>
        <end position="228"/>
    </location>
</feature>
<feature type="domain" description="SWIRM" evidence="2">
    <location>
        <begin position="351"/>
        <end position="449"/>
    </location>
</feature>
<feature type="region of interest" description="Disordered" evidence="3">
    <location>
        <begin position="235"/>
        <end position="303"/>
    </location>
</feature>
<feature type="region of interest" description="Disordered" evidence="3">
    <location>
        <begin position="562"/>
        <end position="596"/>
    </location>
</feature>
<feature type="compositionally biased region" description="Acidic residues" evidence="3">
    <location>
        <begin position="282"/>
        <end position="295"/>
    </location>
</feature>
<feature type="sequence conflict" description="In Ref. 1; AAF70826." evidence="11" ref="1">
    <original>S</original>
    <variation>P</variation>
    <location>
        <position position="386"/>
    </location>
</feature>
<feature type="sequence conflict" description="In Ref. 1; AAF70826." evidence="11" ref="1">
    <original>Q</original>
    <variation>H</variation>
    <location>
        <position position="434"/>
    </location>
</feature>
<proteinExistence type="evidence at protein level"/>
<evidence type="ECO:0000255" key="1">
    <source>
        <dbReference type="PROSITE-ProRule" id="PRU00109"/>
    </source>
</evidence>
<evidence type="ECO:0000255" key="2">
    <source>
        <dbReference type="PROSITE-ProRule" id="PRU00247"/>
    </source>
</evidence>
<evidence type="ECO:0000256" key="3">
    <source>
        <dbReference type="SAM" id="MobiDB-lite"/>
    </source>
</evidence>
<evidence type="ECO:0000269" key="4">
    <source>
    </source>
</evidence>
<evidence type="ECO:0000269" key="5">
    <source>
    </source>
</evidence>
<evidence type="ECO:0000269" key="6">
    <source>
    </source>
</evidence>
<evidence type="ECO:0000269" key="7">
    <source>
    </source>
</evidence>
<evidence type="ECO:0000269" key="8">
    <source>
    </source>
</evidence>
<evidence type="ECO:0000303" key="9">
    <source>
    </source>
</evidence>
<evidence type="ECO:0000303" key="10">
    <source>
    </source>
</evidence>
<evidence type="ECO:0000305" key="11"/>
<evidence type="ECO:0000312" key="12">
    <source>
        <dbReference type="Araport" id="AT1G67370"/>
    </source>
</evidence>
<evidence type="ECO:0000312" key="13">
    <source>
        <dbReference type="EMBL" id="AAG00246.1"/>
    </source>
</evidence>
<evidence type="ECO:0000312" key="14">
    <source>
        <dbReference type="EMBL" id="AAG00247.1"/>
    </source>
</evidence>
<organism>
    <name type="scientific">Arabidopsis thaliana</name>
    <name type="common">Mouse-ear cress</name>
    <dbReference type="NCBI Taxonomy" id="3702"/>
    <lineage>
        <taxon>Eukaryota</taxon>
        <taxon>Viridiplantae</taxon>
        <taxon>Streptophyta</taxon>
        <taxon>Embryophyta</taxon>
        <taxon>Tracheophyta</taxon>
        <taxon>Spermatophyta</taxon>
        <taxon>Magnoliopsida</taxon>
        <taxon>eudicotyledons</taxon>
        <taxon>Gunneridae</taxon>
        <taxon>Pentapetalae</taxon>
        <taxon>rosids</taxon>
        <taxon>malvids</taxon>
        <taxon>Brassicales</taxon>
        <taxon>Brassicaceae</taxon>
        <taxon>Camelineae</taxon>
        <taxon>Arabidopsis</taxon>
    </lineage>
</organism>
<sequence length="596" mass="67211">MVMAQKLKEAEITEQDSLLLTRNLLRIAIFNISYIRGLFPEKYFNDKSVPALDMKIKKLMPMDAESRRLIDWMEKGVYDALQRKYLKTLMFSICETVDGPMIEEYSFSFSYSDSDSQDVMMNINRTGNKKNGGIFNSTADITPNQMRSSACKMVRTLVQLMRTLDKMPDERTIVMKLLYYDDVTPPDYEPPFFRGCTEDEAQYVWTKNPLRMEIGNVNSKHLVLTLKVKSVLDPCEDENDDMQDDGKSIGPDSVHDDQPSDSDSEISQTQENQFIVAPVEKQDDDDGEVDEDDNTQDPAENEQQLARVKDWINSRHLDTLELTDILANFPDISIVLSEEIMDQLVTEGVLSKTGKDMYIKKRDKTPESEFTFVKEEADGQISPGKSVAPEDYLYMKALYHSLPMKYVTITKLHNMLDGEANQTAVRKLMDRMTQEGYVEASSNRRLGKRVIHSSLTEKKLNEVRKVLATDDMDVDVTETINKTNGPDAKVTADVSTCGGIHSIGSDFTRTKGRSGGMQQNGSVLSEQTISKAGNTPISNKAQPAASRESFAVHGGAVKEAETVNCSQASQDRRGRKTSMVREPILQYSKRQKSQAN</sequence>
<gene>
    <name evidence="9" type="primary">ASY1</name>
    <name evidence="12" type="ordered locus">At1g67370/At1g67380</name>
    <name evidence="13 14" type="ORF">F1N21.19/F1N21.20</name>
</gene>
<keyword id="KW-0158">Chromosome</keyword>
<keyword id="KW-0469">Meiosis</keyword>
<keyword id="KW-0539">Nucleus</keyword>
<keyword id="KW-1185">Reference proteome</keyword>
<dbReference type="EMBL" id="AF157556">
    <property type="protein sequence ID" value="AAF70826.1"/>
    <property type="molecule type" value="mRNA"/>
</dbReference>
<dbReference type="EMBL" id="AC002130">
    <property type="protein sequence ID" value="AAG00246.1"/>
    <property type="status" value="ALT_SEQ"/>
    <property type="molecule type" value="Genomic_DNA"/>
</dbReference>
<dbReference type="EMBL" id="AC002130">
    <property type="protein sequence ID" value="AAG00247.1"/>
    <property type="status" value="ALT_SEQ"/>
    <property type="molecule type" value="Genomic_DNA"/>
</dbReference>
<dbReference type="EMBL" id="CP002684">
    <property type="protein sequence ID" value="AEE34638.1"/>
    <property type="molecule type" value="Genomic_DNA"/>
</dbReference>
<dbReference type="PIR" id="B96697">
    <property type="entry name" value="B96697"/>
</dbReference>
<dbReference type="RefSeq" id="NP_564896.1">
    <property type="nucleotide sequence ID" value="NM_105405.1"/>
</dbReference>
<dbReference type="SMR" id="F4HRV8"/>
<dbReference type="FunCoup" id="F4HRV8">
    <property type="interactions" value="1"/>
</dbReference>
<dbReference type="IntAct" id="F4HRV8">
    <property type="interactions" value="5"/>
</dbReference>
<dbReference type="STRING" id="3702.F4HRV8"/>
<dbReference type="iPTMnet" id="F4HRV8"/>
<dbReference type="PaxDb" id="3702-AT1G67370.1"/>
<dbReference type="ProteomicsDB" id="246714"/>
<dbReference type="EnsemblPlants" id="AT1G67370.1">
    <property type="protein sequence ID" value="AT1G67370.1"/>
    <property type="gene ID" value="AT1G67370"/>
</dbReference>
<dbReference type="GeneID" id="843058"/>
<dbReference type="Gramene" id="AT1G67370.1">
    <property type="protein sequence ID" value="AT1G67370.1"/>
    <property type="gene ID" value="AT1G67370"/>
</dbReference>
<dbReference type="KEGG" id="ath:AT1G67370"/>
<dbReference type="Araport" id="AT1G67370"/>
<dbReference type="TAIR" id="AT1G67370">
    <property type="gene designation" value="ASY1"/>
</dbReference>
<dbReference type="eggNOG" id="KOG4652">
    <property type="taxonomic scope" value="Eukaryota"/>
</dbReference>
<dbReference type="HOGENOM" id="CLU_015787_0_0_1"/>
<dbReference type="InParanoid" id="F4HRV8"/>
<dbReference type="OMA" id="FRGCTED"/>
<dbReference type="PRO" id="PR:F4HRV8"/>
<dbReference type="Proteomes" id="UP000006548">
    <property type="component" value="Chromosome 1"/>
</dbReference>
<dbReference type="ExpressionAtlas" id="F4HRV8">
    <property type="expression patterns" value="baseline and differential"/>
</dbReference>
<dbReference type="GO" id="GO:0000785">
    <property type="term" value="C:chromatin"/>
    <property type="evidence" value="ECO:0000314"/>
    <property type="project" value="TAIR"/>
</dbReference>
<dbReference type="GO" id="GO:0005694">
    <property type="term" value="C:chromosome"/>
    <property type="evidence" value="ECO:0000314"/>
    <property type="project" value="TAIR"/>
</dbReference>
<dbReference type="GO" id="GO:0000794">
    <property type="term" value="C:condensed nuclear chromosome"/>
    <property type="evidence" value="ECO:0000314"/>
    <property type="project" value="TAIR"/>
</dbReference>
<dbReference type="GO" id="GO:0005654">
    <property type="term" value="C:nucleoplasm"/>
    <property type="evidence" value="ECO:0000314"/>
    <property type="project" value="TAIR"/>
</dbReference>
<dbReference type="GO" id="GO:0051026">
    <property type="term" value="P:chiasma assembly"/>
    <property type="evidence" value="ECO:0000315"/>
    <property type="project" value="TAIR"/>
</dbReference>
<dbReference type="GO" id="GO:0007129">
    <property type="term" value="P:homologous chromosome pairing at meiosis"/>
    <property type="evidence" value="ECO:0000314"/>
    <property type="project" value="TAIR"/>
</dbReference>
<dbReference type="GO" id="GO:0007130">
    <property type="term" value="P:synaptonemal complex assembly"/>
    <property type="evidence" value="ECO:0000250"/>
    <property type="project" value="TAIR"/>
</dbReference>
<dbReference type="FunFam" id="3.30.900.10:FF:000009">
    <property type="entry name" value="Meiosis-specific protein ASY2"/>
    <property type="match status" value="1"/>
</dbReference>
<dbReference type="Gene3D" id="3.30.900.10">
    <property type="entry name" value="HORMA domain"/>
    <property type="match status" value="1"/>
</dbReference>
<dbReference type="InterPro" id="IPR003511">
    <property type="entry name" value="HORMA_dom"/>
</dbReference>
<dbReference type="InterPro" id="IPR036570">
    <property type="entry name" value="HORMA_dom_sf"/>
</dbReference>
<dbReference type="InterPro" id="IPR051294">
    <property type="entry name" value="HORMA_MeioticProgression"/>
</dbReference>
<dbReference type="InterPro" id="IPR007526">
    <property type="entry name" value="SWIRM"/>
</dbReference>
<dbReference type="InterPro" id="IPR036390">
    <property type="entry name" value="WH_DNA-bd_sf"/>
</dbReference>
<dbReference type="PANTHER" id="PTHR48225">
    <property type="entry name" value="HORMA DOMAIN-CONTAINING PROTEIN 1"/>
    <property type="match status" value="1"/>
</dbReference>
<dbReference type="PANTHER" id="PTHR48225:SF7">
    <property type="entry name" value="MEIOSIS-SPECIFIC PROTEIN HOP1"/>
    <property type="match status" value="1"/>
</dbReference>
<dbReference type="Pfam" id="PF02301">
    <property type="entry name" value="HORMA"/>
    <property type="match status" value="1"/>
</dbReference>
<dbReference type="SUPFAM" id="SSF56019">
    <property type="entry name" value="The spindle assembly checkpoint protein mad2"/>
    <property type="match status" value="1"/>
</dbReference>
<dbReference type="SUPFAM" id="SSF46785">
    <property type="entry name" value="Winged helix' DNA-binding domain"/>
    <property type="match status" value="1"/>
</dbReference>
<dbReference type="PROSITE" id="PS50815">
    <property type="entry name" value="HORMA"/>
    <property type="match status" value="1"/>
</dbReference>
<dbReference type="PROSITE" id="PS50934">
    <property type="entry name" value="SWIRM"/>
    <property type="match status" value="1"/>
</dbReference>
<accession>F4HRV8</accession>
<accession>Q9FYF5</accession>
<accession>Q9FYF6</accession>
<accession>Q9M6R5</accession>
<name>ASY1_ARATH</name>
<reference key="1">
    <citation type="journal article" date="2000" name="Chromosoma">
        <title>A homologue of the yeast HOP1 gene is inactivated in the Arabidopsis meiotic mutant asy1.</title>
        <authorList>
            <person name="Caryl A.P."/>
            <person name="Armstrong S.J."/>
            <person name="Jones G.H."/>
            <person name="Franklin F.C.H."/>
        </authorList>
    </citation>
    <scope>NUCLEOTIDE SEQUENCE [MRNA]</scope>
    <scope>DISRUPTION PHENOTYPE</scope>
    <source>
        <strain>cv. Wassilewskija</strain>
    </source>
</reference>
<reference key="2">
    <citation type="journal article" date="2000" name="Nature">
        <title>Sequence and analysis of chromosome 1 of the plant Arabidopsis thaliana.</title>
        <authorList>
            <person name="Theologis A."/>
            <person name="Ecker J.R."/>
            <person name="Palm C.J."/>
            <person name="Federspiel N.A."/>
            <person name="Kaul S."/>
            <person name="White O."/>
            <person name="Alonso J."/>
            <person name="Altafi H."/>
            <person name="Araujo R."/>
            <person name="Bowman C.L."/>
            <person name="Brooks S.Y."/>
            <person name="Buehler E."/>
            <person name="Chan A."/>
            <person name="Chao Q."/>
            <person name="Chen H."/>
            <person name="Cheuk R.F."/>
            <person name="Chin C.W."/>
            <person name="Chung M.K."/>
            <person name="Conn L."/>
            <person name="Conway A.B."/>
            <person name="Conway A.R."/>
            <person name="Creasy T.H."/>
            <person name="Dewar K."/>
            <person name="Dunn P."/>
            <person name="Etgu P."/>
            <person name="Feldblyum T.V."/>
            <person name="Feng J.-D."/>
            <person name="Fong B."/>
            <person name="Fujii C.Y."/>
            <person name="Gill J.E."/>
            <person name="Goldsmith A.D."/>
            <person name="Haas B."/>
            <person name="Hansen N.F."/>
            <person name="Hughes B."/>
            <person name="Huizar L."/>
            <person name="Hunter J.L."/>
            <person name="Jenkins J."/>
            <person name="Johnson-Hopson C."/>
            <person name="Khan S."/>
            <person name="Khaykin E."/>
            <person name="Kim C.J."/>
            <person name="Koo H.L."/>
            <person name="Kremenetskaia I."/>
            <person name="Kurtz D.B."/>
            <person name="Kwan A."/>
            <person name="Lam B."/>
            <person name="Langin-Hooper S."/>
            <person name="Lee A."/>
            <person name="Lee J.M."/>
            <person name="Lenz C.A."/>
            <person name="Li J.H."/>
            <person name="Li Y.-P."/>
            <person name="Lin X."/>
            <person name="Liu S.X."/>
            <person name="Liu Z.A."/>
            <person name="Luros J.S."/>
            <person name="Maiti R."/>
            <person name="Marziali A."/>
            <person name="Militscher J."/>
            <person name="Miranda M."/>
            <person name="Nguyen M."/>
            <person name="Nierman W.C."/>
            <person name="Osborne B.I."/>
            <person name="Pai G."/>
            <person name="Peterson J."/>
            <person name="Pham P.K."/>
            <person name="Rizzo M."/>
            <person name="Rooney T."/>
            <person name="Rowley D."/>
            <person name="Sakano H."/>
            <person name="Salzberg S.L."/>
            <person name="Schwartz J.R."/>
            <person name="Shinn P."/>
            <person name="Southwick A.M."/>
            <person name="Sun H."/>
            <person name="Tallon L.J."/>
            <person name="Tambunga G."/>
            <person name="Toriumi M.J."/>
            <person name="Town C.D."/>
            <person name="Utterback T."/>
            <person name="Van Aken S."/>
            <person name="Vaysberg M."/>
            <person name="Vysotskaia V.S."/>
            <person name="Walker M."/>
            <person name="Wu D."/>
            <person name="Yu G."/>
            <person name="Fraser C.M."/>
            <person name="Venter J.C."/>
            <person name="Davis R.W."/>
        </authorList>
    </citation>
    <scope>NUCLEOTIDE SEQUENCE [LARGE SCALE GENOMIC DNA]</scope>
    <source>
        <strain>cv. Columbia</strain>
    </source>
</reference>
<reference key="3">
    <citation type="journal article" date="2017" name="Plant J.">
        <title>Araport11: a complete reannotation of the Arabidopsis thaliana reference genome.</title>
        <authorList>
            <person name="Cheng C.Y."/>
            <person name="Krishnakumar V."/>
            <person name="Chan A.P."/>
            <person name="Thibaud-Nissen F."/>
            <person name="Schobel S."/>
            <person name="Town C.D."/>
        </authorList>
    </citation>
    <scope>GENOME REANNOTATION</scope>
    <source>
        <strain>cv. Columbia</strain>
    </source>
</reference>
<reference key="4">
    <citation type="journal article" date="2002" name="J. Cell Sci.">
        <title>Asy1, a protein required for meiotic chromosome synapsis, localizes to axis-associated chromatin in Arabidopsis and Brassica.</title>
        <authorList>
            <person name="Armstrong S.J."/>
            <person name="Caryl A.P."/>
            <person name="Jones G.H."/>
            <person name="Franklin F.C."/>
        </authorList>
    </citation>
    <scope>SUBCELLULAR LOCATION</scope>
</reference>
<reference key="5">
    <citation type="journal article" date="2007" name="Genes Dev.">
        <title>ASY1 mediates AtDMC1-dependent interhomolog recombination during meiosis in Arabidopsis.</title>
        <authorList>
            <person name="Sanchez-Moran E."/>
            <person name="Santos J.-L."/>
            <person name="Jones G.H."/>
            <person name="Franklin F.C."/>
        </authorList>
    </citation>
    <scope>FUNCTION</scope>
</reference>
<reference key="6">
    <citation type="journal article" date="2008" name="Cytogenet. Genome Res.">
        <title>ASY1 coordinates early events in the plant meiotic recombination pathway.</title>
        <authorList>
            <person name="Sanchez-Moran E."/>
            <person name="Osman K."/>
            <person name="Higgins J.D."/>
            <person name="Pradillo M."/>
            <person name="Cunado N."/>
            <person name="Jones G.H."/>
            <person name="Franklin F.C."/>
        </authorList>
    </citation>
    <scope>FUNCTION</scope>
</reference>
<reference key="7">
    <citation type="journal article" date="2012" name="PLoS Genet.">
        <title>Inter-homolog crossing-over and synapsis in Arabidopsis meiosis are dependent on the chromosome axis protein AtASY3.</title>
        <authorList>
            <person name="Ferdous M."/>
            <person name="Higgins J.D."/>
            <person name="Osman K."/>
            <person name="Lambing C."/>
            <person name="Roitinger E."/>
            <person name="Mechtler K."/>
            <person name="Armstrong S.J."/>
            <person name="Perry R."/>
            <person name="Pradillo M."/>
            <person name="Cunado N."/>
            <person name="Franklin F.C."/>
        </authorList>
    </citation>
    <scope>INTERACTION WITH ASY3</scope>
</reference>
<comment type="function">
    <text evidence="6 7">Required for normal meiosis in male and female gametophytes. Plays a crucial role in coordinating the activity of DMC1, a key member of the homologous recombination machinery (PubMed:18504359). Acts at the interface between the developing chromosome axes and the recombination machinery to ensure DMC1-mediated interhomolog recombination (PubMed:17785529).</text>
</comment>
<comment type="subunit">
    <text evidence="8">Interacts with ASY3.</text>
</comment>
<comment type="subcellular location">
    <subcellularLocation>
        <location evidence="5">Chromosome</location>
    </subcellularLocation>
    <subcellularLocation>
        <location evidence="5">Nucleus</location>
    </subcellularLocation>
    <text evidence="5">During interphase-early leptotene, distributed as numerous punctuate foci throughout the chromatin. At zygotene and pachytene, shows a continuous localization along chromosomal axes.</text>
</comment>
<comment type="disruption phenotype">
    <text evidence="4">Failure of the pairing of homologous chromosomes during meiosis (asynapsis or non-homologous synapsis) in both male and female gametophytes.</text>
</comment>
<comment type="sequence caution" evidence="11">
    <conflict type="erroneous gene model prediction">
        <sequence resource="EMBL-CDS" id="AAG00246"/>
    </conflict>
    <text>Was originally thought to correspond to two different genes At1g67370 and At1g67380.</text>
</comment>
<comment type="sequence caution" evidence="11">
    <conflict type="erroneous gene model prediction">
        <sequence resource="EMBL-CDS" id="AAG00247"/>
    </conflict>
    <text>Was originally thought to correspond to two different genes At1g67370 and At1g67380.</text>
</comment>
<protein>
    <recommendedName>
        <fullName evidence="11">Meiosis-specific protein ASY1</fullName>
    </recommendedName>
    <alternativeName>
        <fullName evidence="9">Protein ASYNAPTIC 1</fullName>
        <shortName evidence="10">AtASY1</shortName>
    </alternativeName>
</protein>